<evidence type="ECO:0000255" key="1">
    <source>
        <dbReference type="HAMAP-Rule" id="MF_00075"/>
    </source>
</evidence>
<proteinExistence type="inferred from homology"/>
<reference key="1">
    <citation type="journal article" date="2005" name="Genome Res.">
        <title>Coping with cold: the genome of the versatile marine Antarctica bacterium Pseudoalteromonas haloplanktis TAC125.</title>
        <authorList>
            <person name="Medigue C."/>
            <person name="Krin E."/>
            <person name="Pascal G."/>
            <person name="Barbe V."/>
            <person name="Bernsel A."/>
            <person name="Bertin P.N."/>
            <person name="Cheung F."/>
            <person name="Cruveiller S."/>
            <person name="D'Amico S."/>
            <person name="Duilio A."/>
            <person name="Fang G."/>
            <person name="Feller G."/>
            <person name="Ho C."/>
            <person name="Mangenot S."/>
            <person name="Marino G."/>
            <person name="Nilsson J."/>
            <person name="Parrilli E."/>
            <person name="Rocha E.P.C."/>
            <person name="Rouy Z."/>
            <person name="Sekowska A."/>
            <person name="Tutino M.L."/>
            <person name="Vallenet D."/>
            <person name="von Heijne G."/>
            <person name="Danchin A."/>
        </authorList>
    </citation>
    <scope>NUCLEOTIDE SEQUENCE [LARGE SCALE GENOMIC DNA]</scope>
    <source>
        <strain>TAC 125</strain>
    </source>
</reference>
<comment type="function">
    <text evidence="1">One of the essential components for the initiation of protein synthesis. Stabilizes the binding of IF-2 and IF-3 on the 30S subunit to which N-formylmethionyl-tRNA(fMet) subsequently binds. Helps modulate mRNA selection, yielding the 30S pre-initiation complex (PIC). Upon addition of the 50S ribosomal subunit IF-1, IF-2 and IF-3 are released leaving the mature 70S translation initiation complex.</text>
</comment>
<comment type="subunit">
    <text evidence="1">Component of the 30S ribosomal translation pre-initiation complex which assembles on the 30S ribosome in the order IF-2 and IF-3, IF-1 and N-formylmethionyl-tRNA(fMet); mRNA recruitment can occur at any time during PIC assembly.</text>
</comment>
<comment type="subcellular location">
    <subcellularLocation>
        <location evidence="1">Cytoplasm</location>
    </subcellularLocation>
</comment>
<comment type="similarity">
    <text evidence="1">Belongs to the IF-1 family.</text>
</comment>
<feature type="chain" id="PRO_0000263839" description="Translation initiation factor IF-1">
    <location>
        <begin position="1"/>
        <end position="72"/>
    </location>
</feature>
<feature type="domain" description="S1-like" evidence="1">
    <location>
        <begin position="1"/>
        <end position="72"/>
    </location>
</feature>
<organism>
    <name type="scientific">Pseudoalteromonas translucida (strain TAC 125)</name>
    <dbReference type="NCBI Taxonomy" id="326442"/>
    <lineage>
        <taxon>Bacteria</taxon>
        <taxon>Pseudomonadati</taxon>
        <taxon>Pseudomonadota</taxon>
        <taxon>Gammaproteobacteria</taxon>
        <taxon>Alteromonadales</taxon>
        <taxon>Pseudoalteromonadaceae</taxon>
        <taxon>Pseudoalteromonas</taxon>
    </lineage>
</organism>
<name>IF1_PSET1</name>
<accession>Q3IH34</accession>
<sequence>MAKEDVIEMQGTVLDTLPNTMFRVELENGHVVVAHISGKMRKNYIRILTGDKVTVEMTPYDLSKGRIVFRAR</sequence>
<keyword id="KW-0963">Cytoplasm</keyword>
<keyword id="KW-0396">Initiation factor</keyword>
<keyword id="KW-0648">Protein biosynthesis</keyword>
<keyword id="KW-1185">Reference proteome</keyword>
<keyword id="KW-0694">RNA-binding</keyword>
<keyword id="KW-0699">rRNA-binding</keyword>
<gene>
    <name evidence="1" type="primary">infA</name>
    <name type="ordered locus">PSHAa1723</name>
</gene>
<dbReference type="EMBL" id="CR954246">
    <property type="protein sequence ID" value="CAI86795.1"/>
    <property type="molecule type" value="Genomic_DNA"/>
</dbReference>
<dbReference type="SMR" id="Q3IH34"/>
<dbReference type="STRING" id="326442.PSHAa1723"/>
<dbReference type="KEGG" id="pha:PSHAa1723"/>
<dbReference type="eggNOG" id="COG0361">
    <property type="taxonomic scope" value="Bacteria"/>
</dbReference>
<dbReference type="HOGENOM" id="CLU_151267_1_0_6"/>
<dbReference type="BioCyc" id="PHAL326442:PSHA_RS08450-MONOMER"/>
<dbReference type="Proteomes" id="UP000006843">
    <property type="component" value="Chromosome I"/>
</dbReference>
<dbReference type="GO" id="GO:0005829">
    <property type="term" value="C:cytosol"/>
    <property type="evidence" value="ECO:0007669"/>
    <property type="project" value="TreeGrafter"/>
</dbReference>
<dbReference type="GO" id="GO:0043022">
    <property type="term" value="F:ribosome binding"/>
    <property type="evidence" value="ECO:0007669"/>
    <property type="project" value="UniProtKB-UniRule"/>
</dbReference>
<dbReference type="GO" id="GO:0019843">
    <property type="term" value="F:rRNA binding"/>
    <property type="evidence" value="ECO:0007669"/>
    <property type="project" value="UniProtKB-UniRule"/>
</dbReference>
<dbReference type="GO" id="GO:0003743">
    <property type="term" value="F:translation initiation factor activity"/>
    <property type="evidence" value="ECO:0007669"/>
    <property type="project" value="UniProtKB-UniRule"/>
</dbReference>
<dbReference type="CDD" id="cd04451">
    <property type="entry name" value="S1_IF1"/>
    <property type="match status" value="1"/>
</dbReference>
<dbReference type="FunFam" id="2.40.50.140:FF:000002">
    <property type="entry name" value="Translation initiation factor IF-1"/>
    <property type="match status" value="1"/>
</dbReference>
<dbReference type="Gene3D" id="2.40.50.140">
    <property type="entry name" value="Nucleic acid-binding proteins"/>
    <property type="match status" value="1"/>
</dbReference>
<dbReference type="HAMAP" id="MF_00075">
    <property type="entry name" value="IF_1"/>
    <property type="match status" value="1"/>
</dbReference>
<dbReference type="InterPro" id="IPR012340">
    <property type="entry name" value="NA-bd_OB-fold"/>
</dbReference>
<dbReference type="InterPro" id="IPR006196">
    <property type="entry name" value="RNA-binding_domain_S1_IF1"/>
</dbReference>
<dbReference type="InterPro" id="IPR003029">
    <property type="entry name" value="S1_domain"/>
</dbReference>
<dbReference type="InterPro" id="IPR004368">
    <property type="entry name" value="TIF_IF1"/>
</dbReference>
<dbReference type="NCBIfam" id="TIGR00008">
    <property type="entry name" value="infA"/>
    <property type="match status" value="1"/>
</dbReference>
<dbReference type="PANTHER" id="PTHR33370">
    <property type="entry name" value="TRANSLATION INITIATION FACTOR IF-1, CHLOROPLASTIC"/>
    <property type="match status" value="1"/>
</dbReference>
<dbReference type="PANTHER" id="PTHR33370:SF1">
    <property type="entry name" value="TRANSLATION INITIATION FACTOR IF-1, CHLOROPLASTIC"/>
    <property type="match status" value="1"/>
</dbReference>
<dbReference type="Pfam" id="PF01176">
    <property type="entry name" value="eIF-1a"/>
    <property type="match status" value="1"/>
</dbReference>
<dbReference type="SMART" id="SM00316">
    <property type="entry name" value="S1"/>
    <property type="match status" value="1"/>
</dbReference>
<dbReference type="SUPFAM" id="SSF50249">
    <property type="entry name" value="Nucleic acid-binding proteins"/>
    <property type="match status" value="1"/>
</dbReference>
<dbReference type="PROSITE" id="PS50832">
    <property type="entry name" value="S1_IF1_TYPE"/>
    <property type="match status" value="1"/>
</dbReference>
<protein>
    <recommendedName>
        <fullName evidence="1">Translation initiation factor IF-1</fullName>
    </recommendedName>
</protein>